<proteinExistence type="inferred from homology"/>
<reference key="1">
    <citation type="submission" date="2007-02" db="EMBL/GenBank/DDBJ databases">
        <title>Complete sequence of Mycobacterium sp. JLS.</title>
        <authorList>
            <consortium name="US DOE Joint Genome Institute"/>
            <person name="Copeland A."/>
            <person name="Lucas S."/>
            <person name="Lapidus A."/>
            <person name="Barry K."/>
            <person name="Detter J.C."/>
            <person name="Glavina del Rio T."/>
            <person name="Hammon N."/>
            <person name="Israni S."/>
            <person name="Dalin E."/>
            <person name="Tice H."/>
            <person name="Pitluck S."/>
            <person name="Chain P."/>
            <person name="Malfatti S."/>
            <person name="Shin M."/>
            <person name="Vergez L."/>
            <person name="Schmutz J."/>
            <person name="Larimer F."/>
            <person name="Land M."/>
            <person name="Hauser L."/>
            <person name="Kyrpides N."/>
            <person name="Mikhailova N."/>
            <person name="Miller C.D."/>
            <person name="Anderson A.J."/>
            <person name="Sims R.C."/>
            <person name="Richardson P."/>
        </authorList>
    </citation>
    <scope>NUCLEOTIDE SEQUENCE [LARGE SCALE GENOMIC DNA]</scope>
    <source>
        <strain>JLS</strain>
    </source>
</reference>
<keyword id="KW-0963">Cytoplasm</keyword>
<keyword id="KW-0210">Decarboxylase</keyword>
<keyword id="KW-0312">Gluconeogenesis</keyword>
<keyword id="KW-0342">GTP-binding</keyword>
<keyword id="KW-0456">Lyase</keyword>
<keyword id="KW-0464">Manganese</keyword>
<keyword id="KW-0479">Metal-binding</keyword>
<keyword id="KW-0547">Nucleotide-binding</keyword>
<name>PCKG_MYCSJ</name>
<evidence type="ECO:0000255" key="1">
    <source>
        <dbReference type="HAMAP-Rule" id="MF_00452"/>
    </source>
</evidence>
<protein>
    <recommendedName>
        <fullName evidence="1">Phosphoenolpyruvate carboxykinase [GTP]</fullName>
        <shortName evidence="1">PEP carboxykinase</shortName>
        <shortName evidence="1">PEPCK</shortName>
        <ecNumber evidence="1">4.1.1.32</ecNumber>
    </recommendedName>
</protein>
<organism>
    <name type="scientific">Mycobacterium sp. (strain JLS)</name>
    <dbReference type="NCBI Taxonomy" id="164757"/>
    <lineage>
        <taxon>Bacteria</taxon>
        <taxon>Bacillati</taxon>
        <taxon>Actinomycetota</taxon>
        <taxon>Actinomycetes</taxon>
        <taxon>Mycobacteriales</taxon>
        <taxon>Mycobacteriaceae</taxon>
        <taxon>Mycobacterium</taxon>
    </lineage>
</organism>
<comment type="function">
    <text evidence="1">Catalyzes the conversion of oxaloacetate (OAA) to phosphoenolpyruvate (PEP), the rate-limiting step in the metabolic pathway that produces glucose from lactate and other precursors derived from the citric acid cycle.</text>
</comment>
<comment type="catalytic activity">
    <reaction evidence="1">
        <text>oxaloacetate + GTP = phosphoenolpyruvate + GDP + CO2</text>
        <dbReference type="Rhea" id="RHEA:10388"/>
        <dbReference type="ChEBI" id="CHEBI:16452"/>
        <dbReference type="ChEBI" id="CHEBI:16526"/>
        <dbReference type="ChEBI" id="CHEBI:37565"/>
        <dbReference type="ChEBI" id="CHEBI:58189"/>
        <dbReference type="ChEBI" id="CHEBI:58702"/>
        <dbReference type="EC" id="4.1.1.32"/>
    </reaction>
</comment>
<comment type="cofactor">
    <cofactor evidence="1">
        <name>Mn(2+)</name>
        <dbReference type="ChEBI" id="CHEBI:29035"/>
    </cofactor>
    <text evidence="1">Binds 1 Mn(2+) ion per subunit.</text>
</comment>
<comment type="pathway">
    <text evidence="1">Carbohydrate biosynthesis; gluconeogenesis.</text>
</comment>
<comment type="subunit">
    <text evidence="1">Monomer.</text>
</comment>
<comment type="subcellular location">
    <subcellularLocation>
        <location evidence="1">Cytoplasm</location>
    </subcellularLocation>
</comment>
<comment type="similarity">
    <text evidence="1">Belongs to the phosphoenolpyruvate carboxykinase [GTP] family.</text>
</comment>
<dbReference type="EC" id="4.1.1.32" evidence="1"/>
<dbReference type="EMBL" id="CP000580">
    <property type="protein sequence ID" value="ABN95978.1"/>
    <property type="molecule type" value="Genomic_DNA"/>
</dbReference>
<dbReference type="SMR" id="A3PSV1"/>
<dbReference type="KEGG" id="mjl:Mjls_0165"/>
<dbReference type="HOGENOM" id="CLU_028872_1_1_11"/>
<dbReference type="BioCyc" id="MSP164757:G1G8C-170-MONOMER"/>
<dbReference type="UniPathway" id="UPA00138"/>
<dbReference type="GO" id="GO:0005829">
    <property type="term" value="C:cytosol"/>
    <property type="evidence" value="ECO:0007669"/>
    <property type="project" value="TreeGrafter"/>
</dbReference>
<dbReference type="GO" id="GO:0005525">
    <property type="term" value="F:GTP binding"/>
    <property type="evidence" value="ECO:0007669"/>
    <property type="project" value="UniProtKB-UniRule"/>
</dbReference>
<dbReference type="GO" id="GO:0030145">
    <property type="term" value="F:manganese ion binding"/>
    <property type="evidence" value="ECO:0007669"/>
    <property type="project" value="UniProtKB-UniRule"/>
</dbReference>
<dbReference type="GO" id="GO:0004613">
    <property type="term" value="F:phosphoenolpyruvate carboxykinase (GTP) activity"/>
    <property type="evidence" value="ECO:0007669"/>
    <property type="project" value="UniProtKB-UniRule"/>
</dbReference>
<dbReference type="GO" id="GO:0071333">
    <property type="term" value="P:cellular response to glucose stimulus"/>
    <property type="evidence" value="ECO:0007669"/>
    <property type="project" value="TreeGrafter"/>
</dbReference>
<dbReference type="GO" id="GO:0006094">
    <property type="term" value="P:gluconeogenesis"/>
    <property type="evidence" value="ECO:0007669"/>
    <property type="project" value="UniProtKB-UniRule"/>
</dbReference>
<dbReference type="GO" id="GO:0046327">
    <property type="term" value="P:glycerol biosynthetic process from pyruvate"/>
    <property type="evidence" value="ECO:0007669"/>
    <property type="project" value="TreeGrafter"/>
</dbReference>
<dbReference type="GO" id="GO:0006107">
    <property type="term" value="P:oxaloacetate metabolic process"/>
    <property type="evidence" value="ECO:0007669"/>
    <property type="project" value="TreeGrafter"/>
</dbReference>
<dbReference type="GO" id="GO:0019543">
    <property type="term" value="P:propionate catabolic process"/>
    <property type="evidence" value="ECO:0007669"/>
    <property type="project" value="TreeGrafter"/>
</dbReference>
<dbReference type="GO" id="GO:0033993">
    <property type="term" value="P:response to lipid"/>
    <property type="evidence" value="ECO:0007669"/>
    <property type="project" value="TreeGrafter"/>
</dbReference>
<dbReference type="GO" id="GO:0042594">
    <property type="term" value="P:response to starvation"/>
    <property type="evidence" value="ECO:0007669"/>
    <property type="project" value="TreeGrafter"/>
</dbReference>
<dbReference type="CDD" id="cd00819">
    <property type="entry name" value="PEPCK_GTP"/>
    <property type="match status" value="1"/>
</dbReference>
<dbReference type="FunFam" id="3.40.449.10:FF:000005">
    <property type="entry name" value="Phosphoenolpyruvate carboxykinase [GTP]"/>
    <property type="match status" value="1"/>
</dbReference>
<dbReference type="Gene3D" id="3.90.228.20">
    <property type="match status" value="1"/>
</dbReference>
<dbReference type="Gene3D" id="3.40.449.10">
    <property type="entry name" value="Phosphoenolpyruvate Carboxykinase, domain 1"/>
    <property type="match status" value="1"/>
</dbReference>
<dbReference type="Gene3D" id="2.170.8.10">
    <property type="entry name" value="Phosphoenolpyruvate Carboxykinase, domain 2"/>
    <property type="match status" value="1"/>
</dbReference>
<dbReference type="HAMAP" id="MF_00452">
    <property type="entry name" value="PEPCK_GTP"/>
    <property type="match status" value="1"/>
</dbReference>
<dbReference type="InterPro" id="IPR018091">
    <property type="entry name" value="PEP_carboxykin_GTP_CS"/>
</dbReference>
<dbReference type="InterPro" id="IPR013035">
    <property type="entry name" value="PEP_carboxykinase_C"/>
</dbReference>
<dbReference type="InterPro" id="IPR008209">
    <property type="entry name" value="PEP_carboxykinase_GTP"/>
</dbReference>
<dbReference type="InterPro" id="IPR035077">
    <property type="entry name" value="PEP_carboxykinase_GTP_C"/>
</dbReference>
<dbReference type="InterPro" id="IPR035078">
    <property type="entry name" value="PEP_carboxykinase_GTP_N"/>
</dbReference>
<dbReference type="InterPro" id="IPR008210">
    <property type="entry name" value="PEP_carboxykinase_N"/>
</dbReference>
<dbReference type="NCBIfam" id="NF003253">
    <property type="entry name" value="PRK04210.1"/>
    <property type="match status" value="1"/>
</dbReference>
<dbReference type="PANTHER" id="PTHR11561">
    <property type="entry name" value="PHOSPHOENOLPYRUVATE CARBOXYKINASE"/>
    <property type="match status" value="1"/>
</dbReference>
<dbReference type="PANTHER" id="PTHR11561:SF0">
    <property type="entry name" value="PHOSPHOENOLPYRUVATE CARBOXYKINASE [GTP]-RELATED"/>
    <property type="match status" value="1"/>
</dbReference>
<dbReference type="Pfam" id="PF00821">
    <property type="entry name" value="PEPCK_GTP"/>
    <property type="match status" value="1"/>
</dbReference>
<dbReference type="Pfam" id="PF17297">
    <property type="entry name" value="PEPCK_N"/>
    <property type="match status" value="1"/>
</dbReference>
<dbReference type="PIRSF" id="PIRSF001348">
    <property type="entry name" value="PEP_carboxykinase_GTP"/>
    <property type="match status" value="1"/>
</dbReference>
<dbReference type="SUPFAM" id="SSF68923">
    <property type="entry name" value="PEP carboxykinase N-terminal domain"/>
    <property type="match status" value="1"/>
</dbReference>
<dbReference type="SUPFAM" id="SSF53795">
    <property type="entry name" value="PEP carboxykinase-like"/>
    <property type="match status" value="1"/>
</dbReference>
<dbReference type="PROSITE" id="PS00505">
    <property type="entry name" value="PEPCK_GTP"/>
    <property type="match status" value="1"/>
</dbReference>
<feature type="chain" id="PRO_1000060293" description="Phosphoenolpyruvate carboxykinase [GTP]">
    <location>
        <begin position="1"/>
        <end position="609"/>
    </location>
</feature>
<feature type="active site" evidence="1">
    <location>
        <position position="273"/>
    </location>
</feature>
<feature type="binding site" evidence="1">
    <location>
        <position position="81"/>
    </location>
    <ligand>
        <name>substrate</name>
    </ligand>
</feature>
<feature type="binding site" evidence="1">
    <location>
        <begin position="220"/>
        <end position="222"/>
    </location>
    <ligand>
        <name>substrate</name>
    </ligand>
</feature>
<feature type="binding site" evidence="1">
    <location>
        <position position="229"/>
    </location>
    <ligand>
        <name>Mn(2+)</name>
        <dbReference type="ChEBI" id="CHEBI:29035"/>
    </ligand>
</feature>
<feature type="binding site" evidence="1">
    <location>
        <position position="249"/>
    </location>
    <ligand>
        <name>Mn(2+)</name>
        <dbReference type="ChEBI" id="CHEBI:29035"/>
    </ligand>
</feature>
<feature type="binding site" evidence="1">
    <location>
        <position position="271"/>
    </location>
    <ligand>
        <name>substrate</name>
    </ligand>
</feature>
<feature type="binding site" evidence="1">
    <location>
        <begin position="272"/>
        <end position="277"/>
    </location>
    <ligand>
        <name>GTP</name>
        <dbReference type="ChEBI" id="CHEBI:37565"/>
    </ligand>
</feature>
<feature type="binding site" evidence="1">
    <location>
        <position position="296"/>
    </location>
    <ligand>
        <name>Mn(2+)</name>
        <dbReference type="ChEBI" id="CHEBI:29035"/>
    </ligand>
</feature>
<feature type="binding site" evidence="1">
    <location>
        <begin position="387"/>
        <end position="389"/>
    </location>
    <ligand>
        <name>substrate</name>
    </ligand>
</feature>
<feature type="binding site" evidence="1">
    <location>
        <position position="389"/>
    </location>
    <ligand>
        <name>GTP</name>
        <dbReference type="ChEBI" id="CHEBI:37565"/>
    </ligand>
</feature>
<feature type="binding site" evidence="1">
    <location>
        <position position="420"/>
    </location>
    <ligand>
        <name>GTP</name>
        <dbReference type="ChEBI" id="CHEBI:37565"/>
    </ligand>
</feature>
<feature type="binding site" evidence="1">
    <location>
        <begin position="515"/>
        <end position="518"/>
    </location>
    <ligand>
        <name>GTP</name>
        <dbReference type="ChEBI" id="CHEBI:37565"/>
    </ligand>
</feature>
<sequence length="609" mass="67822">MTSATIPGLDTAPTEHEGLLAWVREVAELTQPDRVVFTDGSEEECARLTEQLCEAGTFQKLNEEKKPNSYLALSDPSDVARVESRTYICSEREIDAGPTNNWMDPAEMRGIMTDLYRGSMRGRTMYVVPFCMGPLEAEDPKLGVEITDSEYVVVSMRTMTRMGQAALDKMGTDGFFVKALHSLGAPLEPGEKDVPWPCNDTKYITHFPETREIWSYGSGYGGNALLGKKCYSLRIASAMAHDEGWLAEHMLILKLISPENKAYFIAAAFPSACGKTNLAMLQPTIPGWRAETVGDDIAWMRFGKDGRLYAVNPEFGFFGVAPGTNWSSNPNAMKTIEAGNTVFTNVAKTDDGDVWWEGLEGEPDHLIDWKGNDYILRETETKAAHPNSRYCTPISQCPTLAPEWDDPQGVPISAILFGGRRKTTVPLITQARDWQHGVFIGATLGSEQTAAAEGKVGTVRRDPMAMLPFLGYNVGDYFQHWIDIGKNADESKMPAVFFVNWFRRGDDGRFLWPGFGENSRVLKWAIERIEHKADGRSTPIGIVPTAQDLDLEGLDVDPEDVDAALAVKPEEWRQELPLIEEWFEFVGEKLPTGIRDEFDALKHRLAEEA</sequence>
<accession>A3PSV1</accession>
<gene>
    <name evidence="1" type="primary">pckG</name>
    <name type="ordered locus">Mjls_0165</name>
</gene>